<gene>
    <name type="ordered locus">BCAH187_A1726</name>
</gene>
<reference key="1">
    <citation type="submission" date="2008-10" db="EMBL/GenBank/DDBJ databases">
        <title>Genome sequence of Bacillus cereus AH187.</title>
        <authorList>
            <person name="Dodson R.J."/>
            <person name="Durkin A.S."/>
            <person name="Rosovitz M.J."/>
            <person name="Rasko D.A."/>
            <person name="Kolsto A.B."/>
            <person name="Okstad O.A."/>
            <person name="Ravel J."/>
            <person name="Sutton G."/>
        </authorList>
    </citation>
    <scope>NUCLEOTIDE SEQUENCE [LARGE SCALE GENOMIC DNA]</scope>
    <source>
        <strain>AH187</strain>
    </source>
</reference>
<protein>
    <recommendedName>
        <fullName evidence="1">UPF0398 protein BCAH187_A1726</fullName>
    </recommendedName>
</protein>
<feature type="chain" id="PRO_1000200766" description="UPF0398 protein BCAH187_A1726">
    <location>
        <begin position="1"/>
        <end position="184"/>
    </location>
</feature>
<proteinExistence type="inferred from homology"/>
<comment type="similarity">
    <text evidence="1">Belongs to the UPF0398 family.</text>
</comment>
<organism>
    <name type="scientific">Bacillus cereus (strain AH187)</name>
    <dbReference type="NCBI Taxonomy" id="405534"/>
    <lineage>
        <taxon>Bacteria</taxon>
        <taxon>Bacillati</taxon>
        <taxon>Bacillota</taxon>
        <taxon>Bacilli</taxon>
        <taxon>Bacillales</taxon>
        <taxon>Bacillaceae</taxon>
        <taxon>Bacillus</taxon>
        <taxon>Bacillus cereus group</taxon>
    </lineage>
</organism>
<name>Y1726_BACC7</name>
<dbReference type="EMBL" id="CP001177">
    <property type="protein sequence ID" value="ACJ79207.1"/>
    <property type="molecule type" value="Genomic_DNA"/>
</dbReference>
<dbReference type="SMR" id="B7HL73"/>
<dbReference type="KEGG" id="bcr:BCAH187_A1726"/>
<dbReference type="HOGENOM" id="CLU_105319_0_0_9"/>
<dbReference type="Proteomes" id="UP000002214">
    <property type="component" value="Chromosome"/>
</dbReference>
<dbReference type="Gene3D" id="3.40.50.450">
    <property type="match status" value="1"/>
</dbReference>
<dbReference type="HAMAP" id="MF_01575">
    <property type="entry name" value="UPF0398"/>
    <property type="match status" value="1"/>
</dbReference>
<dbReference type="InterPro" id="IPR010697">
    <property type="entry name" value="YspA"/>
</dbReference>
<dbReference type="NCBIfam" id="NF010181">
    <property type="entry name" value="PRK13660.1"/>
    <property type="match status" value="1"/>
</dbReference>
<dbReference type="PANTHER" id="PTHR38440:SF1">
    <property type="entry name" value="UPF0398 PROTEIN SPR0331"/>
    <property type="match status" value="1"/>
</dbReference>
<dbReference type="PANTHER" id="PTHR38440">
    <property type="entry name" value="UPF0398 PROTEIN YPSA"/>
    <property type="match status" value="1"/>
</dbReference>
<dbReference type="Pfam" id="PF06908">
    <property type="entry name" value="YpsA"/>
    <property type="match status" value="1"/>
</dbReference>
<dbReference type="PIRSF" id="PIRSF021290">
    <property type="entry name" value="DUF1273"/>
    <property type="match status" value="1"/>
</dbReference>
<dbReference type="SUPFAM" id="SSF102405">
    <property type="entry name" value="MCP/YpsA-like"/>
    <property type="match status" value="1"/>
</dbReference>
<evidence type="ECO:0000255" key="1">
    <source>
        <dbReference type="HAMAP-Rule" id="MF_01575"/>
    </source>
</evidence>
<accession>B7HL73</accession>
<sequence>MKVIAVTGYKPFELGIFKNDHPGVECIKKALRRKLTAFVEDGLEWVIISGQLGVELWAAEVVFEIQVEYPDLKLAVFTPFLEQEEGWKEDNREYYEFILSQADHVDSITKRKYESPEQFKLKNQFFIEKSDALLAVYDEEKPGSPKYIVEAAKKKGEIENYHSYFILFSDLQDIIEEEQWNNAE</sequence>